<proteinExistence type="predicted"/>
<evidence type="ECO:0000255" key="1">
    <source>
        <dbReference type="PROSITE-ProRule" id="PRU00593"/>
    </source>
</evidence>
<feature type="chain" id="PRO_0000194503" description="Putative AraC-like transcription regulator">
    <location>
        <begin position="1"/>
        <end position="303"/>
    </location>
</feature>
<feature type="domain" description="HTH araC/xylS-type" evidence="1">
    <location>
        <begin position="202"/>
        <end position="300"/>
    </location>
</feature>
<feature type="DNA-binding region" description="H-T-H motif" evidence="1">
    <location>
        <begin position="219"/>
        <end position="240"/>
    </location>
</feature>
<feature type="DNA-binding region" description="H-T-H motif" evidence="1">
    <location>
        <begin position="267"/>
        <end position="290"/>
    </location>
</feature>
<reference key="1">
    <citation type="journal article" date="1993" name="J. Bacteriol.">
        <title>The unstable melC operon of Streptomyces antibioticus is codeleted with a Tn4811-homologous locus.</title>
        <authorList>
            <person name="Yu T.-W."/>
            <person name="Chen C.W."/>
        </authorList>
    </citation>
    <scope>NUCLEOTIDE SEQUENCE [GENOMIC DNA]</scope>
    <source>
        <strain>DSM 41481 / IMRU 3720</strain>
    </source>
</reference>
<accession>Q03320</accession>
<protein>
    <recommendedName>
        <fullName>Putative AraC-like transcription regulator</fullName>
    </recommendedName>
</protein>
<name>ARACL_STRAT</name>
<dbReference type="EMBL" id="M96551">
    <property type="protein sequence ID" value="AAA26797.1"/>
    <property type="molecule type" value="Genomic_DNA"/>
</dbReference>
<dbReference type="PIR" id="B47089">
    <property type="entry name" value="B47089"/>
</dbReference>
<dbReference type="RefSeq" id="WP_078631513.1">
    <property type="nucleotide sequence ID" value="NZ_CM007717.1"/>
</dbReference>
<dbReference type="SMR" id="Q03320"/>
<dbReference type="STRING" id="1890.AFM16_00355"/>
<dbReference type="GO" id="GO:0003700">
    <property type="term" value="F:DNA-binding transcription factor activity"/>
    <property type="evidence" value="ECO:0007669"/>
    <property type="project" value="InterPro"/>
</dbReference>
<dbReference type="GO" id="GO:0043565">
    <property type="term" value="F:sequence-specific DNA binding"/>
    <property type="evidence" value="ECO:0007669"/>
    <property type="project" value="InterPro"/>
</dbReference>
<dbReference type="Gene3D" id="1.10.10.60">
    <property type="entry name" value="Homeodomain-like"/>
    <property type="match status" value="2"/>
</dbReference>
<dbReference type="InterPro" id="IPR032783">
    <property type="entry name" value="AraC_lig"/>
</dbReference>
<dbReference type="InterPro" id="IPR050204">
    <property type="entry name" value="AraC_XylS_family_regulators"/>
</dbReference>
<dbReference type="InterPro" id="IPR009057">
    <property type="entry name" value="Homeodomain-like_sf"/>
</dbReference>
<dbReference type="InterPro" id="IPR018060">
    <property type="entry name" value="HTH_AraC"/>
</dbReference>
<dbReference type="InterPro" id="IPR018062">
    <property type="entry name" value="HTH_AraC-typ_CS"/>
</dbReference>
<dbReference type="PANTHER" id="PTHR46796:SF13">
    <property type="entry name" value="HTH-TYPE TRANSCRIPTIONAL ACTIVATOR RHAS"/>
    <property type="match status" value="1"/>
</dbReference>
<dbReference type="PANTHER" id="PTHR46796">
    <property type="entry name" value="HTH-TYPE TRANSCRIPTIONAL ACTIVATOR RHAS-RELATED"/>
    <property type="match status" value="1"/>
</dbReference>
<dbReference type="Pfam" id="PF12852">
    <property type="entry name" value="Cupin_6"/>
    <property type="match status" value="1"/>
</dbReference>
<dbReference type="Pfam" id="PF12833">
    <property type="entry name" value="HTH_18"/>
    <property type="match status" value="1"/>
</dbReference>
<dbReference type="SMART" id="SM00342">
    <property type="entry name" value="HTH_ARAC"/>
    <property type="match status" value="1"/>
</dbReference>
<dbReference type="SUPFAM" id="SSF46689">
    <property type="entry name" value="Homeodomain-like"/>
    <property type="match status" value="2"/>
</dbReference>
<dbReference type="PROSITE" id="PS00041">
    <property type="entry name" value="HTH_ARAC_FAMILY_1"/>
    <property type="match status" value="1"/>
</dbReference>
<dbReference type="PROSITE" id="PS01124">
    <property type="entry name" value="HTH_ARAC_FAMILY_2"/>
    <property type="match status" value="1"/>
</dbReference>
<organism>
    <name type="scientific">Streptomyces antibioticus</name>
    <dbReference type="NCBI Taxonomy" id="1890"/>
    <lineage>
        <taxon>Bacteria</taxon>
        <taxon>Bacillati</taxon>
        <taxon>Actinomycetota</taxon>
        <taxon>Actinomycetes</taxon>
        <taxon>Kitasatosporales</taxon>
        <taxon>Streptomycetaceae</taxon>
        <taxon>Streptomyces</taxon>
    </lineage>
</organism>
<sequence length="303" mass="32309">MDPLEDVLTLLKTRSHLSASLVAGGRWAVVFDAPQVLKFNAVRRGACLLKVDGDDEPIDLAEGDCYLLTRPRSFTLCSDLEAAPSDGGAVFARAEDGIARAGQGDDVFLIGGGFSFATHAQELLLDNLPPVVHVPAGTPHAEAVQWALTAIDQELTHQPMASTLVAEHLAVVMLIHVLRLHLERAPDAVSGWLAGLADPVVASALTFLHRDPAHSWTVAELASAAAVSRSTLAARFKATVGQGPLEYLTRWRIELTARQLREGSAPLAAIAHSVGYGSESALSVAFKRVLGMNPGDYRKHPMP</sequence>
<keyword id="KW-0238">DNA-binding</keyword>
<keyword id="KW-0804">Transcription</keyword>
<keyword id="KW-0805">Transcription regulation</keyword>